<reference key="1">
    <citation type="journal article" date="2000" name="Nature">
        <title>Ancestral chloroplast genome in Mesostigma viride reveals an early branch of green plant evolution.</title>
        <authorList>
            <person name="Lemieux C."/>
            <person name="Otis C."/>
            <person name="Turmel M."/>
        </authorList>
    </citation>
    <scope>NUCLEOTIDE SEQUENCE [LARGE SCALE GENOMIC DNA]</scope>
    <source>
        <strain>NIES-296 / KY-14 / CCMP 2046</strain>
    </source>
</reference>
<organism>
    <name type="scientific">Mesostigma viride</name>
    <name type="common">Green alga</name>
    <dbReference type="NCBI Taxonomy" id="41882"/>
    <lineage>
        <taxon>Eukaryota</taxon>
        <taxon>Viridiplantae</taxon>
        <taxon>Streptophyta</taxon>
        <taxon>Mesostigmatophyceae</taxon>
        <taxon>Mesostigmatales</taxon>
        <taxon>Mesostigmataceae</taxon>
        <taxon>Mesostigma</taxon>
    </lineage>
</organism>
<accession>Q9MUU7</accession>
<gene>
    <name evidence="1" type="primary">infA</name>
</gene>
<dbReference type="EMBL" id="AF166114">
    <property type="protein sequence ID" value="AAF43804.1"/>
    <property type="status" value="ALT_INIT"/>
    <property type="molecule type" value="Genomic_DNA"/>
</dbReference>
<dbReference type="RefSeq" id="NP_038363.2">
    <property type="nucleotide sequence ID" value="NC_002186.1"/>
</dbReference>
<dbReference type="SMR" id="Q9MUU7"/>
<dbReference type="GeneID" id="800891"/>
<dbReference type="GO" id="GO:0009507">
    <property type="term" value="C:chloroplast"/>
    <property type="evidence" value="ECO:0007669"/>
    <property type="project" value="UniProtKB-SubCell"/>
</dbReference>
<dbReference type="GO" id="GO:0005829">
    <property type="term" value="C:cytosol"/>
    <property type="evidence" value="ECO:0007669"/>
    <property type="project" value="TreeGrafter"/>
</dbReference>
<dbReference type="GO" id="GO:0043022">
    <property type="term" value="F:ribosome binding"/>
    <property type="evidence" value="ECO:0007669"/>
    <property type="project" value="UniProtKB-UniRule"/>
</dbReference>
<dbReference type="GO" id="GO:0019843">
    <property type="term" value="F:rRNA binding"/>
    <property type="evidence" value="ECO:0007669"/>
    <property type="project" value="UniProtKB-UniRule"/>
</dbReference>
<dbReference type="GO" id="GO:0003743">
    <property type="term" value="F:translation initiation factor activity"/>
    <property type="evidence" value="ECO:0007669"/>
    <property type="project" value="UniProtKB-UniRule"/>
</dbReference>
<dbReference type="CDD" id="cd04451">
    <property type="entry name" value="S1_IF1"/>
    <property type="match status" value="1"/>
</dbReference>
<dbReference type="FunFam" id="2.40.50.140:FF:000002">
    <property type="entry name" value="Translation initiation factor IF-1"/>
    <property type="match status" value="1"/>
</dbReference>
<dbReference type="Gene3D" id="2.40.50.140">
    <property type="entry name" value="Nucleic acid-binding proteins"/>
    <property type="match status" value="1"/>
</dbReference>
<dbReference type="HAMAP" id="MF_00075">
    <property type="entry name" value="IF_1"/>
    <property type="match status" value="1"/>
</dbReference>
<dbReference type="InterPro" id="IPR012340">
    <property type="entry name" value="NA-bd_OB-fold"/>
</dbReference>
<dbReference type="InterPro" id="IPR006196">
    <property type="entry name" value="RNA-binding_domain_S1_IF1"/>
</dbReference>
<dbReference type="InterPro" id="IPR003029">
    <property type="entry name" value="S1_domain"/>
</dbReference>
<dbReference type="InterPro" id="IPR004368">
    <property type="entry name" value="TIF_IF1"/>
</dbReference>
<dbReference type="NCBIfam" id="TIGR00008">
    <property type="entry name" value="infA"/>
    <property type="match status" value="1"/>
</dbReference>
<dbReference type="PANTHER" id="PTHR33370">
    <property type="entry name" value="TRANSLATION INITIATION FACTOR IF-1, CHLOROPLASTIC"/>
    <property type="match status" value="1"/>
</dbReference>
<dbReference type="PANTHER" id="PTHR33370:SF1">
    <property type="entry name" value="TRANSLATION INITIATION FACTOR IF-1, CHLOROPLASTIC"/>
    <property type="match status" value="1"/>
</dbReference>
<dbReference type="Pfam" id="PF01176">
    <property type="entry name" value="eIF-1a"/>
    <property type="match status" value="1"/>
</dbReference>
<dbReference type="SMART" id="SM00316">
    <property type="entry name" value="S1"/>
    <property type="match status" value="1"/>
</dbReference>
<dbReference type="SUPFAM" id="SSF50249">
    <property type="entry name" value="Nucleic acid-binding proteins"/>
    <property type="match status" value="1"/>
</dbReference>
<dbReference type="PROSITE" id="PS50832">
    <property type="entry name" value="S1_IF1_TYPE"/>
    <property type="match status" value="1"/>
</dbReference>
<proteinExistence type="inferred from homology"/>
<name>IF1C_MESVI</name>
<geneLocation type="chloroplast"/>
<comment type="function">
    <text evidence="1">One of the essential components for the initiation of protein synthesis. Stabilizes the binding of IF-2 and IF-3 on the 30S subunit to which N-formylmethionyl-tRNA(fMet) subsequently binds. Helps modulate mRNA selection, yielding the 30S pre-initiation complex (PIC). Upon addition of the 50S ribosomal subunit IF-1, IF-2 and IF-3 are released leaving the mature 70S translation initiation complex.</text>
</comment>
<comment type="subunit">
    <text evidence="1">Component of the 30S ribosomal translation pre-initiation complex which assembles on the 30S ribosome in the order IF-2 and IF-3, IF-1 and N-formylmethionyl-tRNA(fMet); mRNA recruitment can occur at any time during PIC assembly.</text>
</comment>
<comment type="subcellular location">
    <subcellularLocation>
        <location evidence="1">Plastid</location>
        <location evidence="1">Chloroplast</location>
    </subcellularLocation>
</comment>
<comment type="similarity">
    <text evidence="1">Belongs to the IF-1 family.</text>
</comment>
<comment type="sequence caution" evidence="2">
    <conflict type="erroneous initiation">
        <sequence resource="EMBL-CDS" id="AAF43804"/>
    </conflict>
    <text>Truncated N-terminus.</text>
</comment>
<keyword id="KW-0150">Chloroplast</keyword>
<keyword id="KW-0396">Initiation factor</keyword>
<keyword id="KW-0934">Plastid</keyword>
<keyword id="KW-0648">Protein biosynthesis</keyword>
<keyword id="KW-0694">RNA-binding</keyword>
<keyword id="KW-0699">rRNA-binding</keyword>
<feature type="chain" id="PRO_0000095938" description="Translation initiation factor IF-1, chloroplastic">
    <location>
        <begin position="1"/>
        <end position="74"/>
    </location>
</feature>
<feature type="domain" description="S1-like" evidence="1">
    <location>
        <begin position="1"/>
        <end position="72"/>
    </location>
</feature>
<sequence length="74" mass="8738">MERQNLIEMEGVITESLPNAMFRVHLDNGFNVLAHISGKIRRNYIRILPGDRVKIELTPYDLTKGRITYRLRKR</sequence>
<protein>
    <recommendedName>
        <fullName evidence="1">Translation initiation factor IF-1, chloroplastic</fullName>
    </recommendedName>
</protein>
<evidence type="ECO:0000255" key="1">
    <source>
        <dbReference type="HAMAP-Rule" id="MF_00075"/>
    </source>
</evidence>
<evidence type="ECO:0000305" key="2"/>